<evidence type="ECO:0000255" key="1">
    <source>
        <dbReference type="HAMAP-Rule" id="MF_01238"/>
    </source>
</evidence>
<keyword id="KW-0997">Cell inner membrane</keyword>
<keyword id="KW-1003">Cell membrane</keyword>
<keyword id="KW-0472">Membrane</keyword>
<keyword id="KW-0762">Sugar transport</keyword>
<keyword id="KW-0812">Transmembrane</keyword>
<keyword id="KW-1133">Transmembrane helix</keyword>
<keyword id="KW-0813">Transport</keyword>
<feature type="chain" id="PRO_1000214067" description="Sialic acid transporter NanT">
    <location>
        <begin position="1"/>
        <end position="496"/>
    </location>
</feature>
<feature type="transmembrane region" description="Helical" evidence="1">
    <location>
        <begin position="22"/>
        <end position="42"/>
    </location>
</feature>
<feature type="transmembrane region" description="Helical" evidence="1">
    <location>
        <begin position="58"/>
        <end position="78"/>
    </location>
</feature>
<feature type="transmembrane region" description="Helical" evidence="1">
    <location>
        <begin position="86"/>
        <end position="106"/>
    </location>
</feature>
<feature type="transmembrane region" description="Helical" evidence="1">
    <location>
        <begin position="116"/>
        <end position="136"/>
    </location>
</feature>
<feature type="transmembrane region" description="Helical" evidence="1">
    <location>
        <begin position="148"/>
        <end position="168"/>
    </location>
</feature>
<feature type="transmembrane region" description="Helical" evidence="1">
    <location>
        <begin position="170"/>
        <end position="190"/>
    </location>
</feature>
<feature type="transmembrane region" description="Helical" evidence="1">
    <location>
        <begin position="224"/>
        <end position="244"/>
    </location>
</feature>
<feature type="transmembrane region" description="Helical" evidence="1">
    <location>
        <begin position="247"/>
        <end position="267"/>
    </location>
</feature>
<feature type="transmembrane region" description="Helical" evidence="1">
    <location>
        <begin position="278"/>
        <end position="298"/>
    </location>
</feature>
<feature type="transmembrane region" description="Helical" evidence="1">
    <location>
        <begin position="313"/>
        <end position="333"/>
    </location>
</feature>
<feature type="transmembrane region" description="Helical" evidence="1">
    <location>
        <begin position="353"/>
        <end position="373"/>
    </location>
</feature>
<feature type="transmembrane region" description="Helical" evidence="1">
    <location>
        <begin position="374"/>
        <end position="394"/>
    </location>
</feature>
<feature type="transmembrane region" description="Helical" evidence="1">
    <location>
        <begin position="406"/>
        <end position="426"/>
    </location>
</feature>
<feature type="transmembrane region" description="Helical" evidence="1">
    <location>
        <begin position="431"/>
        <end position="451"/>
    </location>
</feature>
<proteinExistence type="inferred from homology"/>
<organism>
    <name type="scientific">Salmonella schwarzengrund (strain CVM19633)</name>
    <dbReference type="NCBI Taxonomy" id="439843"/>
    <lineage>
        <taxon>Bacteria</taxon>
        <taxon>Pseudomonadati</taxon>
        <taxon>Pseudomonadota</taxon>
        <taxon>Gammaproteobacteria</taxon>
        <taxon>Enterobacterales</taxon>
        <taxon>Enterobacteriaceae</taxon>
        <taxon>Salmonella</taxon>
    </lineage>
</organism>
<comment type="function">
    <text evidence="1">Catalyzes the proton-dependent transport of sialic acid.</text>
</comment>
<comment type="catalytic activity">
    <reaction evidence="1">
        <text>N-acetylneuraminate(in) + H(+)(in) = N-acetylneuraminate(out) + H(+)(out)</text>
        <dbReference type="Rhea" id="RHEA:28987"/>
        <dbReference type="ChEBI" id="CHEBI:15378"/>
        <dbReference type="ChEBI" id="CHEBI:35418"/>
    </reaction>
</comment>
<comment type="subcellular location">
    <subcellularLocation>
        <location evidence="1">Cell inner membrane</location>
        <topology evidence="1">Multi-pass membrane protein</topology>
    </subcellularLocation>
</comment>
<comment type="similarity">
    <text evidence="1">Belongs to the major facilitator superfamily. Sialate:H(+) symporter (SHS) (TC 2.A.1.12) family.</text>
</comment>
<protein>
    <recommendedName>
        <fullName evidence="1">Sialic acid transporter NanT</fullName>
    </recommendedName>
    <alternativeName>
        <fullName evidence="1">Sialic acid permease</fullName>
    </alternativeName>
    <alternativeName>
        <fullName evidence="1">Sialic acid/H(+) symporter</fullName>
    </alternativeName>
</protein>
<reference key="1">
    <citation type="journal article" date="2011" name="J. Bacteriol.">
        <title>Comparative genomics of 28 Salmonella enterica isolates: evidence for CRISPR-mediated adaptive sublineage evolution.</title>
        <authorList>
            <person name="Fricke W.F."/>
            <person name="Mammel M.K."/>
            <person name="McDermott P.F."/>
            <person name="Tartera C."/>
            <person name="White D.G."/>
            <person name="Leclerc J.E."/>
            <person name="Ravel J."/>
            <person name="Cebula T.A."/>
        </authorList>
    </citation>
    <scope>NUCLEOTIDE SEQUENCE [LARGE SCALE GENOMIC DNA]</scope>
    <source>
        <strain>CVM19633</strain>
    </source>
</reference>
<accession>B4TWI9</accession>
<name>NANT_SALSV</name>
<sequence length="496" mass="53656">MSTSTQNIPWYRHLNRAQWRAFSAAWLGYLLDGFDFVLIALVLTEVQSEFGLTTVQAASLISAAFISRWFGGLLLGAMGDRYGRRLAMVSSIILFSVGTLACGFAPGYTTMFIARLVIGMGMAGEYGSSATYVIESWPKHLRNKASGFLISGFSVGAVVAAQVYSLVVPVWGWRALFFIGILPIIFALWLRKNIPEAEDWKEKHAGKAPVRTMVDILYRGEHRIINILMTFAAAAALWFCFAGNLQNAAIVAGLGLLCAVIFISFMVQSSGKRWPTGVMLMLVVLFAFLYSWPIQALLPTYLKTELAYDPHTVANVLFFSGFGAAVGCCVGGFLGDWLGTRKAYVCSLLASQILIIPVFAIGGTNVWVLGLLLFFQQMLGQGIAGILPKLIGGYFDTDQRAAGLGFTYNVGALGGALAPILGALIAQRLDLGTALASLSFSLTFVVILLIGLDMPSRVQRWLRPEALRTHDAIDDKPFSGAVPLGSGKGAFVKTKN</sequence>
<dbReference type="EMBL" id="CP001127">
    <property type="protein sequence ID" value="ACF92704.1"/>
    <property type="molecule type" value="Genomic_DNA"/>
</dbReference>
<dbReference type="RefSeq" id="WP_000108070.1">
    <property type="nucleotide sequence ID" value="NC_011094.1"/>
</dbReference>
<dbReference type="SMR" id="B4TWI9"/>
<dbReference type="KEGG" id="sew:SeSA_A3531"/>
<dbReference type="HOGENOM" id="CLU_001265_46_8_6"/>
<dbReference type="Proteomes" id="UP000001865">
    <property type="component" value="Chromosome"/>
</dbReference>
<dbReference type="GO" id="GO:0005886">
    <property type="term" value="C:plasma membrane"/>
    <property type="evidence" value="ECO:0007669"/>
    <property type="project" value="UniProtKB-SubCell"/>
</dbReference>
<dbReference type="GO" id="GO:0046943">
    <property type="term" value="F:carboxylic acid transmembrane transporter activity"/>
    <property type="evidence" value="ECO:0007669"/>
    <property type="project" value="TreeGrafter"/>
</dbReference>
<dbReference type="GO" id="GO:0015538">
    <property type="term" value="F:sialic acid:proton symporter activity"/>
    <property type="evidence" value="ECO:0007669"/>
    <property type="project" value="UniProtKB-UniRule"/>
</dbReference>
<dbReference type="CDD" id="cd17316">
    <property type="entry name" value="MFS_SV2_like"/>
    <property type="match status" value="1"/>
</dbReference>
<dbReference type="FunFam" id="1.20.1250.20:FF:000027">
    <property type="entry name" value="Sialic acid transporter NanT"/>
    <property type="match status" value="1"/>
</dbReference>
<dbReference type="FunFam" id="1.20.1250.20:FF:000038">
    <property type="entry name" value="Sialic acid transporter NanT"/>
    <property type="match status" value="1"/>
</dbReference>
<dbReference type="Gene3D" id="1.20.1250.20">
    <property type="entry name" value="MFS general substrate transporter like domains"/>
    <property type="match status" value="2"/>
</dbReference>
<dbReference type="HAMAP" id="MF_01238">
    <property type="entry name" value="MFS_NanT"/>
    <property type="match status" value="1"/>
</dbReference>
<dbReference type="InterPro" id="IPR011701">
    <property type="entry name" value="MFS"/>
</dbReference>
<dbReference type="InterPro" id="IPR020846">
    <property type="entry name" value="MFS_dom"/>
</dbReference>
<dbReference type="InterPro" id="IPR036259">
    <property type="entry name" value="MFS_trans_sf"/>
</dbReference>
<dbReference type="InterPro" id="IPR004742">
    <property type="entry name" value="SA_transporter"/>
</dbReference>
<dbReference type="NCBIfam" id="TIGR00891">
    <property type="entry name" value="2A0112"/>
    <property type="match status" value="1"/>
</dbReference>
<dbReference type="NCBIfam" id="NF003024">
    <property type="entry name" value="PRK03893.1"/>
    <property type="match status" value="1"/>
</dbReference>
<dbReference type="PANTHER" id="PTHR23508">
    <property type="entry name" value="CARBOXYLIC ACID TRANSPORTER PROTEIN HOMOLOG"/>
    <property type="match status" value="1"/>
</dbReference>
<dbReference type="PANTHER" id="PTHR23508:SF3">
    <property type="entry name" value="SIALIC ACID TRANSPORTER NANT"/>
    <property type="match status" value="1"/>
</dbReference>
<dbReference type="Pfam" id="PF07690">
    <property type="entry name" value="MFS_1"/>
    <property type="match status" value="1"/>
</dbReference>
<dbReference type="SUPFAM" id="SSF103473">
    <property type="entry name" value="MFS general substrate transporter"/>
    <property type="match status" value="1"/>
</dbReference>
<dbReference type="PROSITE" id="PS50850">
    <property type="entry name" value="MFS"/>
    <property type="match status" value="1"/>
</dbReference>
<gene>
    <name evidence="1" type="primary">nanT</name>
    <name type="ordered locus">SeSA_A3531</name>
</gene>